<dbReference type="EMBL" id="AL157959">
    <property type="protein sequence ID" value="CAM07957.1"/>
    <property type="molecule type" value="Genomic_DNA"/>
</dbReference>
<dbReference type="PIR" id="B81913">
    <property type="entry name" value="B81913"/>
</dbReference>
<dbReference type="RefSeq" id="WP_002217875.1">
    <property type="nucleotide sequence ID" value="NC_003116.1"/>
</dbReference>
<dbReference type="SMR" id="Q9JVT9"/>
<dbReference type="EnsemblBacteria" id="CAM07957">
    <property type="protein sequence ID" value="CAM07957"/>
    <property type="gene ID" value="NMA0700"/>
</dbReference>
<dbReference type="GeneID" id="93386667"/>
<dbReference type="KEGG" id="nma:NMA0700"/>
<dbReference type="HOGENOM" id="CLU_032288_1_0_4"/>
<dbReference type="Proteomes" id="UP000000626">
    <property type="component" value="Chromosome"/>
</dbReference>
<dbReference type="GO" id="GO:0005886">
    <property type="term" value="C:plasma membrane"/>
    <property type="evidence" value="ECO:0007669"/>
    <property type="project" value="UniProtKB-SubCell"/>
</dbReference>
<dbReference type="HAMAP" id="MF_00672">
    <property type="entry name" value="UPF0761"/>
    <property type="match status" value="1"/>
</dbReference>
<dbReference type="InterPro" id="IPR023679">
    <property type="entry name" value="UPF0761_bac"/>
</dbReference>
<dbReference type="InterPro" id="IPR017039">
    <property type="entry name" value="Virul_fac_BrkB"/>
</dbReference>
<dbReference type="NCBIfam" id="NF003256">
    <property type="entry name" value="PRK04214.1"/>
    <property type="match status" value="1"/>
</dbReference>
<dbReference type="NCBIfam" id="TIGR00765">
    <property type="entry name" value="yihY_not_rbn"/>
    <property type="match status" value="1"/>
</dbReference>
<dbReference type="PANTHER" id="PTHR30213">
    <property type="entry name" value="INNER MEMBRANE PROTEIN YHJD"/>
    <property type="match status" value="1"/>
</dbReference>
<dbReference type="PANTHER" id="PTHR30213:SF0">
    <property type="entry name" value="UPF0761 MEMBRANE PROTEIN YIHY"/>
    <property type="match status" value="1"/>
</dbReference>
<dbReference type="Pfam" id="PF03631">
    <property type="entry name" value="Virul_fac_BrkB"/>
    <property type="match status" value="1"/>
</dbReference>
<accession>Q9JVT9</accession>
<accession>A1IQC6</accession>
<evidence type="ECO:0000255" key="1">
    <source>
        <dbReference type="HAMAP-Rule" id="MF_00672"/>
    </source>
</evidence>
<gene>
    <name type="ordered locus">NMA0700</name>
</gene>
<protein>
    <recommendedName>
        <fullName evidence="1">UPF0761 membrane protein NMA0700</fullName>
    </recommendedName>
</protein>
<name>Y700_NEIMA</name>
<organism>
    <name type="scientific">Neisseria meningitidis serogroup A / serotype 4A (strain DSM 15465 / Z2491)</name>
    <dbReference type="NCBI Taxonomy" id="122587"/>
    <lineage>
        <taxon>Bacteria</taxon>
        <taxon>Pseudomonadati</taxon>
        <taxon>Pseudomonadota</taxon>
        <taxon>Betaproteobacteria</taxon>
        <taxon>Neisseriales</taxon>
        <taxon>Neisseriaceae</taxon>
        <taxon>Neisseria</taxon>
    </lineage>
</organism>
<feature type="chain" id="PRO_0000200988" description="UPF0761 membrane protein NMA0700">
    <location>
        <begin position="1"/>
        <end position="408"/>
    </location>
</feature>
<feature type="transmembrane region" description="Helical" evidence="1">
    <location>
        <begin position="43"/>
        <end position="63"/>
    </location>
</feature>
<feature type="transmembrane region" description="Helical" evidence="1">
    <location>
        <begin position="100"/>
        <end position="120"/>
    </location>
</feature>
<feature type="transmembrane region" description="Helical" evidence="1">
    <location>
        <begin position="139"/>
        <end position="159"/>
    </location>
</feature>
<feature type="transmembrane region" description="Helical" evidence="1">
    <location>
        <begin position="176"/>
        <end position="196"/>
    </location>
</feature>
<feature type="transmembrane region" description="Helical" evidence="1">
    <location>
        <begin position="210"/>
        <end position="230"/>
    </location>
</feature>
<feature type="transmembrane region" description="Helical" evidence="1">
    <location>
        <begin position="248"/>
        <end position="268"/>
    </location>
</feature>
<reference key="1">
    <citation type="journal article" date="2000" name="Nature">
        <title>Complete DNA sequence of a serogroup A strain of Neisseria meningitidis Z2491.</title>
        <authorList>
            <person name="Parkhill J."/>
            <person name="Achtman M."/>
            <person name="James K.D."/>
            <person name="Bentley S.D."/>
            <person name="Churcher C.M."/>
            <person name="Klee S.R."/>
            <person name="Morelli G."/>
            <person name="Basham D."/>
            <person name="Brown D."/>
            <person name="Chillingworth T."/>
            <person name="Davies R.M."/>
            <person name="Davis P."/>
            <person name="Devlin K."/>
            <person name="Feltwell T."/>
            <person name="Hamlin N."/>
            <person name="Holroyd S."/>
            <person name="Jagels K."/>
            <person name="Leather S."/>
            <person name="Moule S."/>
            <person name="Mungall K.L."/>
            <person name="Quail M.A."/>
            <person name="Rajandream M.A."/>
            <person name="Rutherford K.M."/>
            <person name="Simmonds M."/>
            <person name="Skelton J."/>
            <person name="Whitehead S."/>
            <person name="Spratt B.G."/>
            <person name="Barrell B.G."/>
        </authorList>
    </citation>
    <scope>NUCLEOTIDE SEQUENCE [LARGE SCALE GENOMIC DNA]</scope>
    <source>
        <strain>DSM 15465 / Z2491</strain>
    </source>
</reference>
<comment type="subcellular location">
    <subcellularLocation>
        <location evidence="1">Cell inner membrane</location>
        <topology evidence="1">Multi-pass membrane protein</topology>
    </subcellularLocation>
</comment>
<comment type="similarity">
    <text evidence="1">Belongs to the UPF0761 family.</text>
</comment>
<sequence length="408" mass="46105">MTFLQRLQGLADNKICAFAWFVVRRFDEERVPQAAASMTFTTLLALVPVLTVMVAVASIFPVFDRWSDSFVSFVNQTIVPQGADMVFDYINAFREQANRLTAIGSVMLVVTSLMLIRTIDNTFNRIWRVNSQRPWMMQFLVYWALLTFGPLSLGVGISFMVGSVQDAALASGAPQWSGALRTAATLTFMTLLLWGLYRFVPNRFVPARQAFVGALATAFCLETARSLFTWYMGNFDGYRSIYGAFAAVPFFLLWLNLLWTLVLGGAVLTSSLSYWQGEAFRRGFDSRGRFDDVLKILLLLDAAQKEGKALPVQEFRRHINMGYDELGELLEKLARHGYIYSGRQGWVLKTGADSIELNELFKLFVYRPLPVERDHVNQAVDAVMMPCLQTLNMTLAEFDAQAKKQQQS</sequence>
<keyword id="KW-0997">Cell inner membrane</keyword>
<keyword id="KW-1003">Cell membrane</keyword>
<keyword id="KW-0472">Membrane</keyword>
<keyword id="KW-0812">Transmembrane</keyword>
<keyword id="KW-1133">Transmembrane helix</keyword>
<proteinExistence type="inferred from homology"/>